<feature type="chain" id="PRO_0000396137" description="Kelch repeat and BTB domain-containing protein 1">
    <location>
        <begin position="1"/>
        <end position="564"/>
    </location>
</feature>
<feature type="domain" description="BTB" evidence="2">
    <location>
        <begin position="21"/>
        <end position="88"/>
    </location>
</feature>
<feature type="domain" description="BACK">
    <location>
        <begin position="123"/>
        <end position="219"/>
    </location>
</feature>
<feature type="repeat" description="Kelch 1">
    <location>
        <begin position="252"/>
        <end position="297"/>
    </location>
</feature>
<feature type="repeat" description="Kelch 2">
    <location>
        <begin position="298"/>
        <end position="346"/>
    </location>
</feature>
<feature type="repeat" description="Kelch 3">
    <location>
        <begin position="347"/>
        <end position="395"/>
    </location>
</feature>
<feature type="repeat" description="Kelch 4">
    <location>
        <begin position="397"/>
        <end position="441"/>
    </location>
</feature>
<feature type="repeat" description="Kelch 5">
    <location>
        <begin position="442"/>
        <end position="492"/>
    </location>
</feature>
<reference key="1">
    <citation type="journal article" date="2006" name="J. Virol.">
        <title>Genome of horsepox virus.</title>
        <authorList>
            <person name="Tulman E.R."/>
            <person name="Delhon G."/>
            <person name="Afonso C.L."/>
            <person name="Lu Z."/>
            <person name="Zsak L."/>
            <person name="Sandybaev N.T."/>
            <person name="Kerembekova U.Z."/>
            <person name="Zaitsev V.L."/>
            <person name="Kutish G.F."/>
            <person name="Rock D.L."/>
        </authorList>
    </citation>
    <scope>NUCLEOTIDE SEQUENCE [LARGE SCALE GENOMIC DNA]</scope>
    <source>
        <strain>MNR-76</strain>
    </source>
</reference>
<organismHost>
    <name type="scientific">Bos taurus</name>
    <name type="common">Bovine</name>
    <dbReference type="NCBI Taxonomy" id="9913"/>
</organismHost>
<organismHost>
    <name type="scientific">Equus caballus</name>
    <name type="common">Horse</name>
    <dbReference type="NCBI Taxonomy" id="9796"/>
</organismHost>
<organismHost>
    <name type="scientific">Homo sapiens</name>
    <name type="common">Human</name>
    <dbReference type="NCBI Taxonomy" id="9606"/>
</organismHost>
<name>KBTB1_HSPV</name>
<evidence type="ECO:0000250" key="1"/>
<evidence type="ECO:0000255" key="2">
    <source>
        <dbReference type="PROSITE-ProRule" id="PRU00037"/>
    </source>
</evidence>
<sequence>MNSSSKLIAVINGFRNSGRFCDINIVINDERINAHKLILSGASEYFSILFSNNFIDSNEYEVNLSHLDYQSVNDLIDYIYGIPLSLTNDNVKYILSTADFLQIGSAITECENYILKNLCSKNCIDFYIYADKYNNKKIESASFNTILQNILRLINDENFKYLTEESMIKILSDDMLNIKNEDFAPLILIKWLESTQQPCTVELLKCLRISLLSPQVIKSLYSHRLVSSIYECITFLNNIAFLDESFPRYHSIELISIGISNSRDKISINCYNHKKNTWEMISSRRYRCSFAVAVLDNIIYMMGGYDQSPYRSSKVIAYNTCTNSWIYDIPELKYPRSNCGGLADDEYIYCIGGIRDQDSSLTSSIDKWKPSKPYWQKYAKMREPKCDMGVAMLNGLIYVIGGIVKGDTCTDALESLSEDGWMKHQRLPIKMSNMSTIVHDGKIYISGGYNNSSVVNVISNLVLSYNSIYDEWTKLSSLNIPRINPALWSTHNKLYVGGGISDDVRTNTSETYDKEKDCWTLDNGHVLPRNYIMYKCEPIKHKYPLEKTQYTNDFLKYLESFIGS</sequence>
<keyword id="KW-1035">Host cytoplasm</keyword>
<keyword id="KW-0945">Host-virus interaction</keyword>
<keyword id="KW-0880">Kelch repeat</keyword>
<keyword id="KW-1123">Modulation of host E3 ubiquitin ligases by virus</keyword>
<keyword id="KW-1130">Modulation of host ubiquitin pathway by virus</keyword>
<keyword id="KW-0677">Repeat</keyword>
<keyword id="KW-0833">Ubl conjugation pathway</keyword>
<comment type="function">
    <text>Probable substrate-specific adapter of CUL3-containing E3 ubiquitin-protein ligases which mediate the ubiquitination and subsequent proteasomal degradation of host target proteins.</text>
</comment>
<comment type="subunit">
    <text evidence="1">Interacts (via BTB domain) with host CUL3.</text>
</comment>
<comment type="subcellular location">
    <subcellularLocation>
        <location evidence="1">Host cytoplasm</location>
    </subcellularLocation>
</comment>
<comment type="domain">
    <text evidence="1">The BTB domain is responsible for the interaction with CUL3 while the Kelch repeat domains supposely serve to recruit the cellular substrates.</text>
</comment>
<gene>
    <name type="primary">KBTB1</name>
    <name type="ordered locus">HSPV176</name>
</gene>
<protein>
    <recommendedName>
        <fullName>Kelch repeat and BTB domain-containing protein 1</fullName>
    </recommendedName>
</protein>
<proteinExistence type="inferred from homology"/>
<accession>Q0GNQ5</accession>
<organism>
    <name type="scientific">Horsepox virus</name>
    <name type="common">HSPV</name>
    <dbReference type="NCBI Taxonomy" id="397342"/>
    <lineage>
        <taxon>Viruses</taxon>
        <taxon>Varidnaviria</taxon>
        <taxon>Bamfordvirae</taxon>
        <taxon>Nucleocytoviricota</taxon>
        <taxon>Pokkesviricetes</taxon>
        <taxon>Chitovirales</taxon>
        <taxon>Poxviridae</taxon>
        <taxon>Chordopoxvirinae</taxon>
        <taxon>Orthopoxvirus</taxon>
        <taxon>Vaccinia virus</taxon>
    </lineage>
</organism>
<dbReference type="EMBL" id="DQ792504">
    <property type="protein sequence ID" value="ABH08286.1"/>
    <property type="molecule type" value="Genomic_DNA"/>
</dbReference>
<dbReference type="SMR" id="Q0GNQ5"/>
<dbReference type="Proteomes" id="UP000111173">
    <property type="component" value="Genome"/>
</dbReference>
<dbReference type="GO" id="GO:0030430">
    <property type="term" value="C:host cell cytoplasm"/>
    <property type="evidence" value="ECO:0007669"/>
    <property type="project" value="UniProtKB-SubCell"/>
</dbReference>
<dbReference type="GO" id="GO:0039648">
    <property type="term" value="P:symbiont-mediated perturbation of host ubiquitin-like protein modification"/>
    <property type="evidence" value="ECO:0007669"/>
    <property type="project" value="UniProtKB-KW"/>
</dbReference>
<dbReference type="Gene3D" id="1.25.40.420">
    <property type="match status" value="1"/>
</dbReference>
<dbReference type="Gene3D" id="2.120.10.80">
    <property type="entry name" value="Kelch-type beta propeller"/>
    <property type="match status" value="1"/>
</dbReference>
<dbReference type="Gene3D" id="3.30.710.10">
    <property type="entry name" value="Potassium Channel Kv1.1, Chain A"/>
    <property type="match status" value="1"/>
</dbReference>
<dbReference type="InterPro" id="IPR011705">
    <property type="entry name" value="BACK"/>
</dbReference>
<dbReference type="InterPro" id="IPR000210">
    <property type="entry name" value="BTB/POZ_dom"/>
</dbReference>
<dbReference type="InterPro" id="IPR015915">
    <property type="entry name" value="Kelch-typ_b-propeller"/>
</dbReference>
<dbReference type="InterPro" id="IPR006652">
    <property type="entry name" value="Kelch_1"/>
</dbReference>
<dbReference type="InterPro" id="IPR011333">
    <property type="entry name" value="SKP1/BTB/POZ_sf"/>
</dbReference>
<dbReference type="InterPro" id="IPR024182">
    <property type="entry name" value="Vaccinia_A55R"/>
</dbReference>
<dbReference type="PANTHER" id="PTHR45632:SF3">
    <property type="entry name" value="KELCH-LIKE PROTEIN 32"/>
    <property type="match status" value="1"/>
</dbReference>
<dbReference type="PANTHER" id="PTHR45632">
    <property type="entry name" value="LD33804P"/>
    <property type="match status" value="1"/>
</dbReference>
<dbReference type="Pfam" id="PF07707">
    <property type="entry name" value="BACK"/>
    <property type="match status" value="1"/>
</dbReference>
<dbReference type="Pfam" id="PF00651">
    <property type="entry name" value="BTB"/>
    <property type="match status" value="1"/>
</dbReference>
<dbReference type="Pfam" id="PF01344">
    <property type="entry name" value="Kelch_1"/>
    <property type="match status" value="3"/>
</dbReference>
<dbReference type="PIRSF" id="PIRSF003716">
    <property type="entry name" value="VAC_F3L"/>
    <property type="match status" value="1"/>
</dbReference>
<dbReference type="SMART" id="SM00875">
    <property type="entry name" value="BACK"/>
    <property type="match status" value="1"/>
</dbReference>
<dbReference type="SMART" id="SM00225">
    <property type="entry name" value="BTB"/>
    <property type="match status" value="1"/>
</dbReference>
<dbReference type="SMART" id="SM00612">
    <property type="entry name" value="Kelch"/>
    <property type="match status" value="5"/>
</dbReference>
<dbReference type="SUPFAM" id="SSF117281">
    <property type="entry name" value="Kelch motif"/>
    <property type="match status" value="1"/>
</dbReference>
<dbReference type="SUPFAM" id="SSF54695">
    <property type="entry name" value="POZ domain"/>
    <property type="match status" value="1"/>
</dbReference>
<dbReference type="PROSITE" id="PS50097">
    <property type="entry name" value="BTB"/>
    <property type="match status" value="1"/>
</dbReference>